<proteinExistence type="inferred from homology"/>
<comment type="function">
    <text evidence="1">Forms part of the ribosomal stalk, playing a central role in the interaction of the ribosome with GTP-bound translation factors.</text>
</comment>
<comment type="subunit">
    <text evidence="1">Part of the ribosomal stalk of the 50S ribosomal subunit. The N-terminus interacts with L11 and the large rRNA to form the base of the stalk. The C-terminus forms an elongated spine to which L12 dimers bind in a sequential fashion forming a multimeric L10(L12)X complex.</text>
</comment>
<comment type="similarity">
    <text evidence="1">Belongs to the universal ribosomal protein uL10 family.</text>
</comment>
<evidence type="ECO:0000255" key="1">
    <source>
        <dbReference type="HAMAP-Rule" id="MF_00362"/>
    </source>
</evidence>
<evidence type="ECO:0000305" key="2"/>
<reference key="1">
    <citation type="journal article" date="2005" name="Nat. Biotechnol.">
        <title>Complete genome sequence of the acetic acid bacterium Gluconobacter oxydans.</title>
        <authorList>
            <person name="Prust C."/>
            <person name="Hoffmeister M."/>
            <person name="Liesegang H."/>
            <person name="Wiezer A."/>
            <person name="Fricke W.F."/>
            <person name="Ehrenreich A."/>
            <person name="Gottschalk G."/>
            <person name="Deppenmeier U."/>
        </authorList>
    </citation>
    <scope>NUCLEOTIDE SEQUENCE [LARGE SCALE GENOMIC DNA]</scope>
    <source>
        <strain>621H</strain>
    </source>
</reference>
<keyword id="KW-1185">Reference proteome</keyword>
<keyword id="KW-0687">Ribonucleoprotein</keyword>
<keyword id="KW-0689">Ribosomal protein</keyword>
<keyword id="KW-0694">RNA-binding</keyword>
<keyword id="KW-0699">rRNA-binding</keyword>
<feature type="chain" id="PRO_0000234851" description="Large ribosomal subunit protein uL10">
    <location>
        <begin position="1"/>
        <end position="184"/>
    </location>
</feature>
<gene>
    <name evidence="1" type="primary">rplJ</name>
    <name type="ordered locus">GOX0388</name>
</gene>
<dbReference type="EMBL" id="CP000009">
    <property type="protein sequence ID" value="AAW60171.1"/>
    <property type="molecule type" value="Genomic_DNA"/>
</dbReference>
<dbReference type="SMR" id="Q5FTX5"/>
<dbReference type="STRING" id="290633.GOX0388"/>
<dbReference type="KEGG" id="gox:GOX0388"/>
<dbReference type="eggNOG" id="COG0244">
    <property type="taxonomic scope" value="Bacteria"/>
</dbReference>
<dbReference type="HOGENOM" id="CLU_092227_0_0_5"/>
<dbReference type="Proteomes" id="UP000006375">
    <property type="component" value="Chromosome"/>
</dbReference>
<dbReference type="GO" id="GO:1990904">
    <property type="term" value="C:ribonucleoprotein complex"/>
    <property type="evidence" value="ECO:0007669"/>
    <property type="project" value="UniProtKB-KW"/>
</dbReference>
<dbReference type="GO" id="GO:0005840">
    <property type="term" value="C:ribosome"/>
    <property type="evidence" value="ECO:0007669"/>
    <property type="project" value="UniProtKB-KW"/>
</dbReference>
<dbReference type="GO" id="GO:0070180">
    <property type="term" value="F:large ribosomal subunit rRNA binding"/>
    <property type="evidence" value="ECO:0007669"/>
    <property type="project" value="UniProtKB-UniRule"/>
</dbReference>
<dbReference type="GO" id="GO:0006412">
    <property type="term" value="P:translation"/>
    <property type="evidence" value="ECO:0007669"/>
    <property type="project" value="UniProtKB-UniRule"/>
</dbReference>
<dbReference type="CDD" id="cd05797">
    <property type="entry name" value="Ribosomal_L10"/>
    <property type="match status" value="1"/>
</dbReference>
<dbReference type="Gene3D" id="3.30.70.1730">
    <property type="match status" value="1"/>
</dbReference>
<dbReference type="Gene3D" id="6.10.250.290">
    <property type="match status" value="1"/>
</dbReference>
<dbReference type="HAMAP" id="MF_00362">
    <property type="entry name" value="Ribosomal_uL10"/>
    <property type="match status" value="1"/>
</dbReference>
<dbReference type="InterPro" id="IPR001790">
    <property type="entry name" value="Ribosomal_uL10"/>
</dbReference>
<dbReference type="InterPro" id="IPR043141">
    <property type="entry name" value="Ribosomal_uL10-like_sf"/>
</dbReference>
<dbReference type="InterPro" id="IPR022973">
    <property type="entry name" value="Ribosomal_uL10_bac"/>
</dbReference>
<dbReference type="InterPro" id="IPR047865">
    <property type="entry name" value="Ribosomal_uL10_bac_type"/>
</dbReference>
<dbReference type="NCBIfam" id="NF000955">
    <property type="entry name" value="PRK00099.1-1"/>
    <property type="match status" value="1"/>
</dbReference>
<dbReference type="PANTHER" id="PTHR11560">
    <property type="entry name" value="39S RIBOSOMAL PROTEIN L10, MITOCHONDRIAL"/>
    <property type="match status" value="1"/>
</dbReference>
<dbReference type="Pfam" id="PF00466">
    <property type="entry name" value="Ribosomal_L10"/>
    <property type="match status" value="1"/>
</dbReference>
<dbReference type="SUPFAM" id="SSF160369">
    <property type="entry name" value="Ribosomal protein L10-like"/>
    <property type="match status" value="1"/>
</dbReference>
<accession>Q5FTX5</accession>
<protein>
    <recommendedName>
        <fullName evidence="1">Large ribosomal subunit protein uL10</fullName>
    </recommendedName>
    <alternativeName>
        <fullName evidence="2">50S ribosomal protein L10</fullName>
    </alternativeName>
</protein>
<name>RL10_GLUOX</name>
<organism>
    <name type="scientific">Gluconobacter oxydans (strain 621H)</name>
    <name type="common">Gluconobacter suboxydans</name>
    <dbReference type="NCBI Taxonomy" id="290633"/>
    <lineage>
        <taxon>Bacteria</taxon>
        <taxon>Pseudomonadati</taxon>
        <taxon>Pseudomonadota</taxon>
        <taxon>Alphaproteobacteria</taxon>
        <taxon>Acetobacterales</taxon>
        <taxon>Acetobacteraceae</taxon>
        <taxon>Gluconobacter</taxon>
    </lineage>
</organism>
<sequence>MKAGLTRRQVLDRTEKRAFVEFLADVFGSTSMVVVTQNKGLTVADVTELRRRIRAAGATYKVAKNRLASRALDGTQFDGIAPLLKGPTALAWSEDPASVAKVIVEFAKTNDKLVVLGGALGSQALGVDGIKALAELPSLDELRAKLVGMINTPATRIAGVVQAPAGQLARVFGAYAKAGEAEAA</sequence>